<protein>
    <recommendedName>
        <fullName evidence="1">UPF0435 protein BLi00816/BL03111</fullName>
    </recommendedName>
</protein>
<reference key="1">
    <citation type="journal article" date="2004" name="J. Mol. Microbiol. Biotechnol.">
        <title>The complete genome sequence of Bacillus licheniformis DSM13, an organism with great industrial potential.</title>
        <authorList>
            <person name="Veith B."/>
            <person name="Herzberg C."/>
            <person name="Steckel S."/>
            <person name="Feesche J."/>
            <person name="Maurer K.H."/>
            <person name="Ehrenreich P."/>
            <person name="Baeumer S."/>
            <person name="Henne A."/>
            <person name="Liesegang H."/>
            <person name="Merkl R."/>
            <person name="Ehrenreich A."/>
            <person name="Gottschalk G."/>
        </authorList>
    </citation>
    <scope>NUCLEOTIDE SEQUENCE [LARGE SCALE GENOMIC DNA]</scope>
    <source>
        <strain>ATCC 14580 / DSM 13 / JCM 2505 / CCUG 7422 / NBRC 12200 / NCIMB 9375 / NCTC 10341 / NRRL NRS-1264 / Gibson 46</strain>
    </source>
</reference>
<reference key="2">
    <citation type="journal article" date="2004" name="Genome Biol.">
        <title>Complete genome sequence of the industrial bacterium Bacillus licheniformis and comparisons with closely related Bacillus species.</title>
        <authorList>
            <person name="Rey M.W."/>
            <person name="Ramaiya P."/>
            <person name="Nelson B.A."/>
            <person name="Brody-Karpin S.D."/>
            <person name="Zaretsky E.J."/>
            <person name="Tang M."/>
            <person name="Lopez de Leon A."/>
            <person name="Xiang H."/>
            <person name="Gusti V."/>
            <person name="Clausen I.G."/>
            <person name="Olsen P.B."/>
            <person name="Rasmussen M.D."/>
            <person name="Andersen J.T."/>
            <person name="Joergensen P.L."/>
            <person name="Larsen T.S."/>
            <person name="Sorokin A."/>
            <person name="Bolotin A."/>
            <person name="Lapidus A."/>
            <person name="Galleron N."/>
            <person name="Ehrlich S.D."/>
            <person name="Berka R.M."/>
        </authorList>
    </citation>
    <scope>NUCLEOTIDE SEQUENCE [LARGE SCALE GENOMIC DNA]</scope>
    <source>
        <strain>ATCC 14580 / DSM 13 / JCM 2505 / CCUG 7422 / NBRC 12200 / NCIMB 9375 / NCTC 10341 / NRRL NRS-1264 / Gibson 46</strain>
    </source>
</reference>
<dbReference type="EMBL" id="CP000002">
    <property type="protein sequence ID" value="AAU22403.1"/>
    <property type="molecule type" value="Genomic_DNA"/>
</dbReference>
<dbReference type="EMBL" id="AE017333">
    <property type="protein sequence ID" value="AAU39751.1"/>
    <property type="molecule type" value="Genomic_DNA"/>
</dbReference>
<dbReference type="RefSeq" id="WP_003179785.1">
    <property type="nucleotide sequence ID" value="NC_006322.1"/>
</dbReference>
<dbReference type="SMR" id="Q65MG3"/>
<dbReference type="STRING" id="279010.BL03111"/>
<dbReference type="KEGG" id="bld:BLi00816"/>
<dbReference type="KEGG" id="bli:BL03111"/>
<dbReference type="eggNOG" id="COG4840">
    <property type="taxonomic scope" value="Bacteria"/>
</dbReference>
<dbReference type="HOGENOM" id="CLU_199533_1_0_9"/>
<dbReference type="Proteomes" id="UP000000606">
    <property type="component" value="Chromosome"/>
</dbReference>
<dbReference type="HAMAP" id="MF_00829">
    <property type="entry name" value="UPF0435"/>
    <property type="match status" value="1"/>
</dbReference>
<dbReference type="InterPro" id="IPR009507">
    <property type="entry name" value="UPF0435"/>
</dbReference>
<dbReference type="Pfam" id="PF06569">
    <property type="entry name" value="DUF1128"/>
    <property type="match status" value="1"/>
</dbReference>
<gene>
    <name type="ordered locus">BLi00816</name>
    <name type="ordered locus">BL03111</name>
</gene>
<comment type="similarity">
    <text evidence="1">Belongs to the UPF0435 family.</text>
</comment>
<name>Y816_BACLD</name>
<accession>Q65MG3</accession>
<accession>Q62XV5</accession>
<proteinExistence type="inferred from homology"/>
<evidence type="ECO:0000255" key="1">
    <source>
        <dbReference type="HAMAP-Rule" id="MF_00829"/>
    </source>
</evidence>
<sequence length="71" mass="8189">MSDQKTAELNKMIEEISQKLNMLNIGVIKAEDFSNEKLEDLEYLHQMVMKKKSFSPSEMQAIAEELAALRK</sequence>
<feature type="chain" id="PRO_0000291405" description="UPF0435 protein BLi00816/BL03111">
    <location>
        <begin position="1"/>
        <end position="71"/>
    </location>
</feature>
<keyword id="KW-1185">Reference proteome</keyword>
<organism>
    <name type="scientific">Bacillus licheniformis (strain ATCC 14580 / DSM 13 / JCM 2505 / CCUG 7422 / NBRC 12200 / NCIMB 9375 / NCTC 10341 / NRRL NRS-1264 / Gibson 46)</name>
    <dbReference type="NCBI Taxonomy" id="279010"/>
    <lineage>
        <taxon>Bacteria</taxon>
        <taxon>Bacillati</taxon>
        <taxon>Bacillota</taxon>
        <taxon>Bacilli</taxon>
        <taxon>Bacillales</taxon>
        <taxon>Bacillaceae</taxon>
        <taxon>Bacillus</taxon>
    </lineage>
</organism>